<dbReference type="EC" id="7.1.2.2" evidence="2"/>
<dbReference type="EMBL" id="AP009368">
    <property type="protein sequence ID" value="BAF49924.1"/>
    <property type="molecule type" value="Genomic_DNA"/>
</dbReference>
<dbReference type="RefSeq" id="YP_001123100.1">
    <property type="nucleotide sequence ID" value="NC_009267.1"/>
</dbReference>
<dbReference type="SMR" id="A4QJR8"/>
<dbReference type="GeneID" id="4962417"/>
<dbReference type="GO" id="GO:0009535">
    <property type="term" value="C:chloroplast thylakoid membrane"/>
    <property type="evidence" value="ECO:0007669"/>
    <property type="project" value="UniProtKB-SubCell"/>
</dbReference>
<dbReference type="GO" id="GO:0045259">
    <property type="term" value="C:proton-transporting ATP synthase complex"/>
    <property type="evidence" value="ECO:0007669"/>
    <property type="project" value="UniProtKB-KW"/>
</dbReference>
<dbReference type="GO" id="GO:0043531">
    <property type="term" value="F:ADP binding"/>
    <property type="evidence" value="ECO:0007669"/>
    <property type="project" value="TreeGrafter"/>
</dbReference>
<dbReference type="GO" id="GO:0005524">
    <property type="term" value="F:ATP binding"/>
    <property type="evidence" value="ECO:0007669"/>
    <property type="project" value="UniProtKB-UniRule"/>
</dbReference>
<dbReference type="GO" id="GO:0046933">
    <property type="term" value="F:proton-transporting ATP synthase activity, rotational mechanism"/>
    <property type="evidence" value="ECO:0007669"/>
    <property type="project" value="UniProtKB-UniRule"/>
</dbReference>
<dbReference type="CDD" id="cd18113">
    <property type="entry name" value="ATP-synt_F1_alpha_C"/>
    <property type="match status" value="1"/>
</dbReference>
<dbReference type="CDD" id="cd18116">
    <property type="entry name" value="ATP-synt_F1_alpha_N"/>
    <property type="match status" value="1"/>
</dbReference>
<dbReference type="CDD" id="cd01132">
    <property type="entry name" value="F1-ATPase_alpha_CD"/>
    <property type="match status" value="1"/>
</dbReference>
<dbReference type="FunFam" id="1.20.150.20:FF:000001">
    <property type="entry name" value="ATP synthase subunit alpha"/>
    <property type="match status" value="1"/>
</dbReference>
<dbReference type="FunFam" id="2.40.30.20:FF:000001">
    <property type="entry name" value="ATP synthase subunit alpha"/>
    <property type="match status" value="1"/>
</dbReference>
<dbReference type="FunFam" id="3.40.50.300:FF:000002">
    <property type="entry name" value="ATP synthase subunit alpha"/>
    <property type="match status" value="1"/>
</dbReference>
<dbReference type="Gene3D" id="2.40.30.20">
    <property type="match status" value="1"/>
</dbReference>
<dbReference type="Gene3D" id="1.20.150.20">
    <property type="entry name" value="ATP synthase alpha/beta chain, C-terminal domain"/>
    <property type="match status" value="1"/>
</dbReference>
<dbReference type="Gene3D" id="3.40.50.300">
    <property type="entry name" value="P-loop containing nucleotide triphosphate hydrolases"/>
    <property type="match status" value="1"/>
</dbReference>
<dbReference type="HAMAP" id="MF_01346">
    <property type="entry name" value="ATP_synth_alpha_bact"/>
    <property type="match status" value="1"/>
</dbReference>
<dbReference type="InterPro" id="IPR023366">
    <property type="entry name" value="ATP_synth_asu-like_sf"/>
</dbReference>
<dbReference type="InterPro" id="IPR000793">
    <property type="entry name" value="ATP_synth_asu_C"/>
</dbReference>
<dbReference type="InterPro" id="IPR038376">
    <property type="entry name" value="ATP_synth_asu_C_sf"/>
</dbReference>
<dbReference type="InterPro" id="IPR033732">
    <property type="entry name" value="ATP_synth_F1_a_nt-bd_dom"/>
</dbReference>
<dbReference type="InterPro" id="IPR005294">
    <property type="entry name" value="ATP_synth_F1_asu"/>
</dbReference>
<dbReference type="InterPro" id="IPR020003">
    <property type="entry name" value="ATPase_a/bsu_AS"/>
</dbReference>
<dbReference type="InterPro" id="IPR004100">
    <property type="entry name" value="ATPase_F1/V1/A1_a/bsu_N"/>
</dbReference>
<dbReference type="InterPro" id="IPR036121">
    <property type="entry name" value="ATPase_F1/V1/A1_a/bsu_N_sf"/>
</dbReference>
<dbReference type="InterPro" id="IPR000194">
    <property type="entry name" value="ATPase_F1/V1/A1_a/bsu_nucl-bd"/>
</dbReference>
<dbReference type="InterPro" id="IPR027417">
    <property type="entry name" value="P-loop_NTPase"/>
</dbReference>
<dbReference type="NCBIfam" id="TIGR00962">
    <property type="entry name" value="atpA"/>
    <property type="match status" value="1"/>
</dbReference>
<dbReference type="NCBIfam" id="NF009884">
    <property type="entry name" value="PRK13343.1"/>
    <property type="match status" value="1"/>
</dbReference>
<dbReference type="PANTHER" id="PTHR48082">
    <property type="entry name" value="ATP SYNTHASE SUBUNIT ALPHA, MITOCHONDRIAL"/>
    <property type="match status" value="1"/>
</dbReference>
<dbReference type="PANTHER" id="PTHR48082:SF2">
    <property type="entry name" value="ATP SYNTHASE SUBUNIT ALPHA, MITOCHONDRIAL"/>
    <property type="match status" value="1"/>
</dbReference>
<dbReference type="Pfam" id="PF00006">
    <property type="entry name" value="ATP-synt_ab"/>
    <property type="match status" value="1"/>
</dbReference>
<dbReference type="Pfam" id="PF00306">
    <property type="entry name" value="ATP-synt_ab_C"/>
    <property type="match status" value="1"/>
</dbReference>
<dbReference type="Pfam" id="PF02874">
    <property type="entry name" value="ATP-synt_ab_N"/>
    <property type="match status" value="1"/>
</dbReference>
<dbReference type="PIRSF" id="PIRSF039088">
    <property type="entry name" value="F_ATPase_subunit_alpha"/>
    <property type="match status" value="1"/>
</dbReference>
<dbReference type="SUPFAM" id="SSF47917">
    <property type="entry name" value="C-terminal domain of alpha and beta subunits of F1 ATP synthase"/>
    <property type="match status" value="1"/>
</dbReference>
<dbReference type="SUPFAM" id="SSF50615">
    <property type="entry name" value="N-terminal domain of alpha and beta subunits of F1 ATP synthase"/>
    <property type="match status" value="1"/>
</dbReference>
<dbReference type="SUPFAM" id="SSF52540">
    <property type="entry name" value="P-loop containing nucleoside triphosphate hydrolases"/>
    <property type="match status" value="1"/>
</dbReference>
<dbReference type="PROSITE" id="PS00152">
    <property type="entry name" value="ATPASE_ALPHA_BETA"/>
    <property type="match status" value="1"/>
</dbReference>
<accession>A4QJR8</accession>
<name>ATPA_OLIPU</name>
<evidence type="ECO:0000250" key="1">
    <source>
        <dbReference type="UniProtKB" id="P56757"/>
    </source>
</evidence>
<evidence type="ECO:0000255" key="2">
    <source>
        <dbReference type="HAMAP-Rule" id="MF_01346"/>
    </source>
</evidence>
<keyword id="KW-0066">ATP synthesis</keyword>
<keyword id="KW-0067">ATP-binding</keyword>
<keyword id="KW-0139">CF(1)</keyword>
<keyword id="KW-0150">Chloroplast</keyword>
<keyword id="KW-0375">Hydrogen ion transport</keyword>
<keyword id="KW-0406">Ion transport</keyword>
<keyword id="KW-0472">Membrane</keyword>
<keyword id="KW-0547">Nucleotide-binding</keyword>
<keyword id="KW-0597">Phosphoprotein</keyword>
<keyword id="KW-0934">Plastid</keyword>
<keyword id="KW-0793">Thylakoid</keyword>
<keyword id="KW-1278">Translocase</keyword>
<keyword id="KW-0813">Transport</keyword>
<feature type="chain" id="PRO_0000339104" description="ATP synthase subunit alpha, chloroplastic">
    <location>
        <begin position="1"/>
        <end position="506"/>
    </location>
</feature>
<feature type="binding site" evidence="2">
    <location>
        <begin position="170"/>
        <end position="177"/>
    </location>
    <ligand>
        <name>ATP</name>
        <dbReference type="ChEBI" id="CHEBI:30616"/>
    </ligand>
</feature>
<feature type="site" description="Required for activity" evidence="2">
    <location>
        <position position="363"/>
    </location>
</feature>
<feature type="modified residue" description="Phosphothreonine" evidence="1">
    <location>
        <position position="257"/>
    </location>
</feature>
<geneLocation type="chloroplast"/>
<reference key="1">
    <citation type="submission" date="2007-03" db="EMBL/GenBank/DDBJ databases">
        <title>Sequence analysis of Arabidopsis pumila JS2 chloroplast DNA.</title>
        <authorList>
            <person name="Hosouchi T."/>
            <person name="Tsuruoka H."/>
            <person name="Kotani H."/>
        </authorList>
    </citation>
    <scope>NUCLEOTIDE SEQUENCE [LARGE SCALE GENOMIC DNA]</scope>
</reference>
<sequence length="506" mass="55215">MVTIRADEISNIIRERIEQYNREVTIVNTGTVLQVGDGIARIYGLDEVMAGELVEFEEGTIGIALNLESNNVGVVLMGDGLMIQEGSSVKATGKIAQIPVSDAYLGRVINALANPIDGRGKISASESRLIESPAPGIISRRSVYEPLQTGLIAIDSMIPIGRGQRELIIGDRQTGKTAVATDTILNQQGQNVICVYVAIGQKASSVAQVVTSLQERGAMEYTIVVAETADSPATLQYLAPYTGAALAEYFMYREQHTLIIYDDLSKQAQAYRQMSLLLRRPPGREAYPGDVFYLHSRLLERAAKLSSQLGEGSMTALPIVETQSGDVSAYIPTNVISITDGQIFLSADLFNSGIRPAINVGISVSRVGSAAQIKAMKQVAGKLKLELAQFAELEAFAQFSSDLDKATQNQLARGQRLRELLKQSQSAPLTVEEQIMTIYTGTNGYLDGLEIGQVRKFLVQLRTYLKTNKPQFQEIIASTKTLTAEAESFLKEGIQEQLERFLLQEK</sequence>
<comment type="function">
    <text evidence="2">Produces ATP from ADP in the presence of a proton gradient across the membrane. The alpha chain is a regulatory subunit.</text>
</comment>
<comment type="catalytic activity">
    <reaction evidence="2">
        <text>ATP + H2O + 4 H(+)(in) = ADP + phosphate + 5 H(+)(out)</text>
        <dbReference type="Rhea" id="RHEA:57720"/>
        <dbReference type="ChEBI" id="CHEBI:15377"/>
        <dbReference type="ChEBI" id="CHEBI:15378"/>
        <dbReference type="ChEBI" id="CHEBI:30616"/>
        <dbReference type="ChEBI" id="CHEBI:43474"/>
        <dbReference type="ChEBI" id="CHEBI:456216"/>
        <dbReference type="EC" id="7.1.2.2"/>
    </reaction>
</comment>
<comment type="subunit">
    <text evidence="2">F-type ATPases have 2 components, CF(1) - the catalytic core - and CF(0) - the membrane proton channel. CF(1) has five subunits: alpha(3), beta(3), gamma(1), delta(1), epsilon(1). CF(0) has four main subunits: a, b, b' and c.</text>
</comment>
<comment type="subcellular location">
    <subcellularLocation>
        <location evidence="2">Plastid</location>
        <location evidence="2">Chloroplast thylakoid membrane</location>
        <topology evidence="2">Peripheral membrane protein</topology>
    </subcellularLocation>
</comment>
<comment type="similarity">
    <text evidence="2">Belongs to the ATPase alpha/beta chains family.</text>
</comment>
<organism>
    <name type="scientific">Olimarabidopsis pumila</name>
    <name type="common">Dwarf rocket</name>
    <name type="synonym">Arabidopsis griffithiana</name>
    <dbReference type="NCBI Taxonomy" id="74718"/>
    <lineage>
        <taxon>Eukaryota</taxon>
        <taxon>Viridiplantae</taxon>
        <taxon>Streptophyta</taxon>
        <taxon>Embryophyta</taxon>
        <taxon>Tracheophyta</taxon>
        <taxon>Spermatophyta</taxon>
        <taxon>Magnoliopsida</taxon>
        <taxon>eudicotyledons</taxon>
        <taxon>Gunneridae</taxon>
        <taxon>Pentapetalae</taxon>
        <taxon>rosids</taxon>
        <taxon>malvids</taxon>
        <taxon>Brassicales</taxon>
        <taxon>Brassicaceae</taxon>
        <taxon>Alyssopsideae</taxon>
        <taxon>Olimarabidopsis</taxon>
    </lineage>
</organism>
<protein>
    <recommendedName>
        <fullName evidence="2">ATP synthase subunit alpha, chloroplastic</fullName>
        <ecNumber evidence="2">7.1.2.2</ecNumber>
    </recommendedName>
    <alternativeName>
        <fullName evidence="2">ATP synthase F1 sector subunit alpha</fullName>
    </alternativeName>
    <alternativeName>
        <fullName evidence="2">F-ATPase subunit alpha</fullName>
    </alternativeName>
</protein>
<proteinExistence type="inferred from homology"/>
<gene>
    <name evidence="2" type="primary">atpA</name>
</gene>